<evidence type="ECO:0007829" key="1">
    <source>
        <dbReference type="PDB" id="5FIG"/>
    </source>
</evidence>
<name>YHJQ_BACSU</name>
<gene>
    <name type="primary">yhjQ</name>
    <name type="ordered locus">BSU10600</name>
</gene>
<accession>O07571</accession>
<accession>Q796R5</accession>
<proteinExistence type="evidence at protein level"/>
<organism>
    <name type="scientific">Bacillus subtilis (strain 168)</name>
    <dbReference type="NCBI Taxonomy" id="224308"/>
    <lineage>
        <taxon>Bacteria</taxon>
        <taxon>Bacillati</taxon>
        <taxon>Bacillota</taxon>
        <taxon>Bacilli</taxon>
        <taxon>Bacillales</taxon>
        <taxon>Bacillaceae</taxon>
        <taxon>Bacillus</taxon>
    </lineage>
</organism>
<dbReference type="EMBL" id="Y14081">
    <property type="protein sequence ID" value="CAA74479.1"/>
    <property type="molecule type" value="Genomic_DNA"/>
</dbReference>
<dbReference type="EMBL" id="AL009126">
    <property type="protein sequence ID" value="CAB12900.1"/>
    <property type="molecule type" value="Genomic_DNA"/>
</dbReference>
<dbReference type="PIR" id="H69834">
    <property type="entry name" value="H69834"/>
</dbReference>
<dbReference type="RefSeq" id="NP_388941.1">
    <property type="nucleotide sequence ID" value="NC_000964.3"/>
</dbReference>
<dbReference type="RefSeq" id="WP_009966950.1">
    <property type="nucleotide sequence ID" value="NZ_OZ025638.1"/>
</dbReference>
<dbReference type="PDB" id="5FIG">
    <property type="method" value="X-ray"/>
    <property type="resolution" value="1.70 A"/>
    <property type="chains" value="A/B/C/D/E/F=1-108"/>
</dbReference>
<dbReference type="PDB" id="6WKT">
    <property type="method" value="EM"/>
    <property type="resolution" value="3.40 A"/>
    <property type="chains" value="A/B/C/D=1-108"/>
</dbReference>
<dbReference type="PDBsum" id="5FIG"/>
<dbReference type="PDBsum" id="6WKT"/>
<dbReference type="EMDB" id="EMD-21708"/>
<dbReference type="SMR" id="O07571"/>
<dbReference type="FunCoup" id="O07571">
    <property type="interactions" value="12"/>
</dbReference>
<dbReference type="STRING" id="224308.BSU10600"/>
<dbReference type="PaxDb" id="224308-BSU10600"/>
<dbReference type="DNASU" id="939779"/>
<dbReference type="EnsemblBacteria" id="CAB12900">
    <property type="protein sequence ID" value="CAB12900"/>
    <property type="gene ID" value="BSU_10600"/>
</dbReference>
<dbReference type="GeneID" id="939779"/>
<dbReference type="KEGG" id="bsu:BSU10600"/>
<dbReference type="PATRIC" id="fig|224308.179.peg.1139"/>
<dbReference type="eggNOG" id="ENOG5032SB1">
    <property type="taxonomic scope" value="Bacteria"/>
</dbReference>
<dbReference type="InParanoid" id="O07571"/>
<dbReference type="OrthoDB" id="5396211at2"/>
<dbReference type="PhylomeDB" id="O07571"/>
<dbReference type="BioCyc" id="BSUB:BSU10600-MONOMER"/>
<dbReference type="Proteomes" id="UP000001570">
    <property type="component" value="Chromosome"/>
</dbReference>
<dbReference type="CDD" id="cd08026">
    <property type="entry name" value="DUF326"/>
    <property type="match status" value="1"/>
</dbReference>
<dbReference type="Gene3D" id="1.20.1270.360">
    <property type="match status" value="1"/>
</dbReference>
<dbReference type="InterPro" id="IPR005560">
    <property type="entry name" value="DUF326"/>
</dbReference>
<dbReference type="InterPro" id="IPR044543">
    <property type="entry name" value="YHJQ-like"/>
</dbReference>
<dbReference type="PANTHER" id="PTHR37310:SF1">
    <property type="entry name" value="CYTOPLASMIC PROTEIN"/>
    <property type="match status" value="1"/>
</dbReference>
<dbReference type="PANTHER" id="PTHR37310">
    <property type="entry name" value="CYTOPLASMIC PROTEIN-RELATED"/>
    <property type="match status" value="1"/>
</dbReference>
<dbReference type="Pfam" id="PF03860">
    <property type="entry name" value="DUF326"/>
    <property type="match status" value="4"/>
</dbReference>
<keyword id="KW-0002">3D-structure</keyword>
<keyword id="KW-1185">Reference proteome</keyword>
<sequence>MEQYSEACIEACIDCMKACNHCFTKCLEESVQHHLSGCIRLDRECADICALAVKAMQTDSPFMKEICALCADICEACGTECGKHDHDHCQACAKACFTCAEQCRSMAA</sequence>
<feature type="chain" id="PRO_0000390297" description="Uncharacterized cysteine-rich protein YhjQ">
    <location>
        <begin position="1"/>
        <end position="108"/>
    </location>
</feature>
<feature type="helix" evidence="1">
    <location>
        <begin position="6"/>
        <end position="27"/>
    </location>
</feature>
<feature type="helix" evidence="1">
    <location>
        <begin position="36"/>
        <end position="57"/>
    </location>
</feature>
<feature type="helix" evidence="1">
    <location>
        <begin position="63"/>
        <end position="81"/>
    </location>
</feature>
<feature type="helix" evidence="1">
    <location>
        <begin position="89"/>
        <end position="107"/>
    </location>
</feature>
<protein>
    <recommendedName>
        <fullName>Uncharacterized cysteine-rich protein YhjQ</fullName>
    </recommendedName>
</protein>
<reference key="1">
    <citation type="submission" date="1997-06" db="EMBL/GenBank/DDBJ databases">
        <authorList>
            <person name="Noback M.A."/>
            <person name="Terpstra P."/>
            <person name="Holsappel S."/>
            <person name="Venema G."/>
            <person name="Bron S."/>
        </authorList>
    </citation>
    <scope>NUCLEOTIDE SEQUENCE [GENOMIC DNA]</scope>
    <source>
        <strain>168</strain>
    </source>
</reference>
<reference key="2">
    <citation type="journal article" date="1997" name="Nature">
        <title>The complete genome sequence of the Gram-positive bacterium Bacillus subtilis.</title>
        <authorList>
            <person name="Kunst F."/>
            <person name="Ogasawara N."/>
            <person name="Moszer I."/>
            <person name="Albertini A.M."/>
            <person name="Alloni G."/>
            <person name="Azevedo V."/>
            <person name="Bertero M.G."/>
            <person name="Bessieres P."/>
            <person name="Bolotin A."/>
            <person name="Borchert S."/>
            <person name="Borriss R."/>
            <person name="Boursier L."/>
            <person name="Brans A."/>
            <person name="Braun M."/>
            <person name="Brignell S.C."/>
            <person name="Bron S."/>
            <person name="Brouillet S."/>
            <person name="Bruschi C.V."/>
            <person name="Caldwell B."/>
            <person name="Capuano V."/>
            <person name="Carter N.M."/>
            <person name="Choi S.-K."/>
            <person name="Codani J.-J."/>
            <person name="Connerton I.F."/>
            <person name="Cummings N.J."/>
            <person name="Daniel R.A."/>
            <person name="Denizot F."/>
            <person name="Devine K.M."/>
            <person name="Duesterhoeft A."/>
            <person name="Ehrlich S.D."/>
            <person name="Emmerson P.T."/>
            <person name="Entian K.-D."/>
            <person name="Errington J."/>
            <person name="Fabret C."/>
            <person name="Ferrari E."/>
            <person name="Foulger D."/>
            <person name="Fritz C."/>
            <person name="Fujita M."/>
            <person name="Fujita Y."/>
            <person name="Fuma S."/>
            <person name="Galizzi A."/>
            <person name="Galleron N."/>
            <person name="Ghim S.-Y."/>
            <person name="Glaser P."/>
            <person name="Goffeau A."/>
            <person name="Golightly E.J."/>
            <person name="Grandi G."/>
            <person name="Guiseppi G."/>
            <person name="Guy B.J."/>
            <person name="Haga K."/>
            <person name="Haiech J."/>
            <person name="Harwood C.R."/>
            <person name="Henaut A."/>
            <person name="Hilbert H."/>
            <person name="Holsappel S."/>
            <person name="Hosono S."/>
            <person name="Hullo M.-F."/>
            <person name="Itaya M."/>
            <person name="Jones L.-M."/>
            <person name="Joris B."/>
            <person name="Karamata D."/>
            <person name="Kasahara Y."/>
            <person name="Klaerr-Blanchard M."/>
            <person name="Klein C."/>
            <person name="Kobayashi Y."/>
            <person name="Koetter P."/>
            <person name="Koningstein G."/>
            <person name="Krogh S."/>
            <person name="Kumano M."/>
            <person name="Kurita K."/>
            <person name="Lapidus A."/>
            <person name="Lardinois S."/>
            <person name="Lauber J."/>
            <person name="Lazarevic V."/>
            <person name="Lee S.-M."/>
            <person name="Levine A."/>
            <person name="Liu H."/>
            <person name="Masuda S."/>
            <person name="Mauel C."/>
            <person name="Medigue C."/>
            <person name="Medina N."/>
            <person name="Mellado R.P."/>
            <person name="Mizuno M."/>
            <person name="Moestl D."/>
            <person name="Nakai S."/>
            <person name="Noback M."/>
            <person name="Noone D."/>
            <person name="O'Reilly M."/>
            <person name="Ogawa K."/>
            <person name="Ogiwara A."/>
            <person name="Oudega B."/>
            <person name="Park S.-H."/>
            <person name="Parro V."/>
            <person name="Pohl T.M."/>
            <person name="Portetelle D."/>
            <person name="Porwollik S."/>
            <person name="Prescott A.M."/>
            <person name="Presecan E."/>
            <person name="Pujic P."/>
            <person name="Purnelle B."/>
            <person name="Rapoport G."/>
            <person name="Rey M."/>
            <person name="Reynolds S."/>
            <person name="Rieger M."/>
            <person name="Rivolta C."/>
            <person name="Rocha E."/>
            <person name="Roche B."/>
            <person name="Rose M."/>
            <person name="Sadaie Y."/>
            <person name="Sato T."/>
            <person name="Scanlan E."/>
            <person name="Schleich S."/>
            <person name="Schroeter R."/>
            <person name="Scoffone F."/>
            <person name="Sekiguchi J."/>
            <person name="Sekowska A."/>
            <person name="Seror S.J."/>
            <person name="Serror P."/>
            <person name="Shin B.-S."/>
            <person name="Soldo B."/>
            <person name="Sorokin A."/>
            <person name="Tacconi E."/>
            <person name="Takagi T."/>
            <person name="Takahashi H."/>
            <person name="Takemaru K."/>
            <person name="Takeuchi M."/>
            <person name="Tamakoshi A."/>
            <person name="Tanaka T."/>
            <person name="Terpstra P."/>
            <person name="Tognoni A."/>
            <person name="Tosato V."/>
            <person name="Uchiyama S."/>
            <person name="Vandenbol M."/>
            <person name="Vannier F."/>
            <person name="Vassarotti A."/>
            <person name="Viari A."/>
            <person name="Wambutt R."/>
            <person name="Wedler E."/>
            <person name="Wedler H."/>
            <person name="Weitzenegger T."/>
            <person name="Winters P."/>
            <person name="Wipat A."/>
            <person name="Yamamoto H."/>
            <person name="Yamane K."/>
            <person name="Yasumoto K."/>
            <person name="Yata K."/>
            <person name="Yoshida K."/>
            <person name="Yoshikawa H.-F."/>
            <person name="Zumstein E."/>
            <person name="Yoshikawa H."/>
            <person name="Danchin A."/>
        </authorList>
    </citation>
    <scope>NUCLEOTIDE SEQUENCE [LARGE SCALE GENOMIC DNA]</scope>
    <source>
        <strain>168</strain>
    </source>
</reference>